<keyword id="KW-0002">3D-structure</keyword>
<keyword id="KW-0025">Alternative splicing</keyword>
<keyword id="KW-0966">Cell projection</keyword>
<keyword id="KW-1186">Ciliopathy</keyword>
<keyword id="KW-0969">Cilium</keyword>
<keyword id="KW-0963">Cytoplasm</keyword>
<keyword id="KW-0206">Cytoskeleton</keyword>
<keyword id="KW-0225">Disease variant</keyword>
<keyword id="KW-0282">Flagellum</keyword>
<keyword id="KW-0990">Primary ciliary dyskinesia</keyword>
<keyword id="KW-1267">Proteomics identification</keyword>
<keyword id="KW-1185">Reference proteome</keyword>
<keyword id="KW-0677">Repeat</keyword>
<keyword id="KW-0853">WD repeat</keyword>
<dbReference type="EMBL" id="AK097409">
    <property type="protein sequence ID" value="BAC05039.1"/>
    <property type="molecule type" value="mRNA"/>
</dbReference>
<dbReference type="EMBL" id="AK098821">
    <property type="protein sequence ID" value="BAC05425.1"/>
    <property type="molecule type" value="mRNA"/>
</dbReference>
<dbReference type="EMBL" id="AK127882">
    <property type="protein sequence ID" value="BAC87175.1"/>
    <property type="molecule type" value="mRNA"/>
</dbReference>
<dbReference type="EMBL" id="AC073065">
    <property type="protein sequence ID" value="AAX93215.1"/>
    <property type="molecule type" value="Genomic_DNA"/>
</dbReference>
<dbReference type="EMBL" id="BC036377">
    <property type="protein sequence ID" value="AAH36377.1"/>
    <property type="molecule type" value="mRNA"/>
</dbReference>
<dbReference type="CCDS" id="CCDS2470.1">
    <molecule id="Q8N136-1"/>
</dbReference>
<dbReference type="RefSeq" id="NP_001316933.1">
    <property type="nucleotide sequence ID" value="NM_001330004.1"/>
</dbReference>
<dbReference type="RefSeq" id="NP_849143.1">
    <molecule id="Q8N136-1"/>
    <property type="nucleotide sequence ID" value="NM_178821.3"/>
</dbReference>
<dbReference type="PDB" id="5NNZ">
    <property type="method" value="X-ray"/>
    <property type="resolution" value="2.65 A"/>
    <property type="chains" value="A/B=1-415"/>
</dbReference>
<dbReference type="PDBsum" id="5NNZ"/>
<dbReference type="SMR" id="Q8N136"/>
<dbReference type="BioGRID" id="127902">
    <property type="interactions" value="10"/>
</dbReference>
<dbReference type="FunCoup" id="Q8N136">
    <property type="interactions" value="28"/>
</dbReference>
<dbReference type="IntAct" id="Q8N136">
    <property type="interactions" value="4"/>
</dbReference>
<dbReference type="MINT" id="Q8N136"/>
<dbReference type="STRING" id="9606.ENSP00000311899"/>
<dbReference type="iPTMnet" id="Q8N136"/>
<dbReference type="PhosphoSitePlus" id="Q8N136"/>
<dbReference type="BioMuta" id="DAW1"/>
<dbReference type="DMDM" id="74759762"/>
<dbReference type="MassIVE" id="Q8N136"/>
<dbReference type="PaxDb" id="9606-ENSP00000311899"/>
<dbReference type="PeptideAtlas" id="Q8N136"/>
<dbReference type="ProteomicsDB" id="71536">
    <molecule id="Q8N136-1"/>
</dbReference>
<dbReference type="ProteomicsDB" id="71537">
    <molecule id="Q8N136-2"/>
</dbReference>
<dbReference type="Antibodypedia" id="49828">
    <property type="antibodies" value="16 antibodies from 8 providers"/>
</dbReference>
<dbReference type="DNASU" id="164781"/>
<dbReference type="Ensembl" id="ENST00000309931.3">
    <molecule id="Q8N136-1"/>
    <property type="protein sequence ID" value="ENSP00000311899.2"/>
    <property type="gene ID" value="ENSG00000123977.10"/>
</dbReference>
<dbReference type="GeneID" id="164781"/>
<dbReference type="KEGG" id="hsa:164781"/>
<dbReference type="MANE-Select" id="ENST00000309931.3">
    <property type="protein sequence ID" value="ENSP00000311899.2"/>
    <property type="RefSeq nucleotide sequence ID" value="NM_178821.3"/>
    <property type="RefSeq protein sequence ID" value="NP_849143.1"/>
</dbReference>
<dbReference type="UCSC" id="uc002vpn.2">
    <molecule id="Q8N136-1"/>
    <property type="organism name" value="human"/>
</dbReference>
<dbReference type="AGR" id="HGNC:26383"/>
<dbReference type="CTD" id="164781"/>
<dbReference type="DisGeNET" id="164781"/>
<dbReference type="GeneCards" id="DAW1"/>
<dbReference type="HGNC" id="HGNC:26383">
    <property type="gene designation" value="DAW1"/>
</dbReference>
<dbReference type="HPA" id="ENSG00000123977">
    <property type="expression patterns" value="Group enriched (choroid plexus, fallopian tube, testis)"/>
</dbReference>
<dbReference type="MalaCards" id="DAW1"/>
<dbReference type="MIM" id="620279">
    <property type="type" value="gene"/>
</dbReference>
<dbReference type="MIM" id="620570">
    <property type="type" value="phenotype"/>
</dbReference>
<dbReference type="neXtProt" id="NX_Q8N136"/>
<dbReference type="OpenTargets" id="ENSG00000123977"/>
<dbReference type="PharmGKB" id="PA142670602"/>
<dbReference type="VEuPathDB" id="HostDB:ENSG00000123977"/>
<dbReference type="eggNOG" id="KOG0272">
    <property type="taxonomic scope" value="Eukaryota"/>
</dbReference>
<dbReference type="GeneTree" id="ENSGT00940000162537"/>
<dbReference type="HOGENOM" id="CLU_000288_57_33_1"/>
<dbReference type="InParanoid" id="Q8N136"/>
<dbReference type="OMA" id="TCKLWEA"/>
<dbReference type="OrthoDB" id="674604at2759"/>
<dbReference type="PAN-GO" id="Q8N136">
    <property type="GO annotations" value="3 GO annotations based on evolutionary models"/>
</dbReference>
<dbReference type="PhylomeDB" id="Q8N136"/>
<dbReference type="TreeFam" id="TF323481"/>
<dbReference type="PathwayCommons" id="Q8N136"/>
<dbReference type="SignaLink" id="Q8N136"/>
<dbReference type="BioGRID-ORCS" id="164781">
    <property type="hits" value="7 hits in 1144 CRISPR screens"/>
</dbReference>
<dbReference type="CD-CODE" id="91857CE7">
    <property type="entry name" value="Nucleolus"/>
</dbReference>
<dbReference type="ChiTaRS" id="DAW1">
    <property type="organism name" value="human"/>
</dbReference>
<dbReference type="GenomeRNAi" id="164781"/>
<dbReference type="Pharos" id="Q8N136">
    <property type="development level" value="Tdark"/>
</dbReference>
<dbReference type="PRO" id="PR:Q8N136"/>
<dbReference type="Proteomes" id="UP000005640">
    <property type="component" value="Chromosome 2"/>
</dbReference>
<dbReference type="RNAct" id="Q8N136">
    <property type="molecule type" value="protein"/>
</dbReference>
<dbReference type="Bgee" id="ENSG00000123977">
    <property type="expression patterns" value="Expressed in secondary oocyte and 95 other cell types or tissues"/>
</dbReference>
<dbReference type="ExpressionAtlas" id="Q8N136">
    <property type="expression patterns" value="baseline and differential"/>
</dbReference>
<dbReference type="GO" id="GO:0036064">
    <property type="term" value="C:ciliary basal body"/>
    <property type="evidence" value="ECO:0000250"/>
    <property type="project" value="UniProtKB"/>
</dbReference>
<dbReference type="GO" id="GO:0005929">
    <property type="term" value="C:cilium"/>
    <property type="evidence" value="ECO:0000250"/>
    <property type="project" value="UniProtKB"/>
</dbReference>
<dbReference type="GO" id="GO:0005737">
    <property type="term" value="C:cytoplasm"/>
    <property type="evidence" value="ECO:0007669"/>
    <property type="project" value="UniProtKB-KW"/>
</dbReference>
<dbReference type="GO" id="GO:0005576">
    <property type="term" value="C:extracellular region"/>
    <property type="evidence" value="ECO:0007669"/>
    <property type="project" value="GOC"/>
</dbReference>
<dbReference type="GO" id="GO:0031514">
    <property type="term" value="C:motile cilium"/>
    <property type="evidence" value="ECO:0007669"/>
    <property type="project" value="UniProtKB-KW"/>
</dbReference>
<dbReference type="GO" id="GO:0019005">
    <property type="term" value="C:SCF ubiquitin ligase complex"/>
    <property type="evidence" value="ECO:0000318"/>
    <property type="project" value="GO_Central"/>
</dbReference>
<dbReference type="GO" id="GO:1990756">
    <property type="term" value="F:ubiquitin-like ligase-substrate adaptor activity"/>
    <property type="evidence" value="ECO:0000318"/>
    <property type="project" value="GO_Central"/>
</dbReference>
<dbReference type="GO" id="GO:0090660">
    <property type="term" value="P:cerebrospinal fluid circulation"/>
    <property type="evidence" value="ECO:0007669"/>
    <property type="project" value="Ensembl"/>
</dbReference>
<dbReference type="GO" id="GO:0007368">
    <property type="term" value="P:determination of left/right symmetry"/>
    <property type="evidence" value="ECO:0007669"/>
    <property type="project" value="Ensembl"/>
</dbReference>
<dbReference type="GO" id="GO:0007507">
    <property type="term" value="P:heart development"/>
    <property type="evidence" value="ECO:0007669"/>
    <property type="project" value="Ensembl"/>
</dbReference>
<dbReference type="GO" id="GO:0042073">
    <property type="term" value="P:intraciliary transport"/>
    <property type="evidence" value="ECO:0000250"/>
    <property type="project" value="UniProtKB"/>
</dbReference>
<dbReference type="GO" id="GO:0036158">
    <property type="term" value="P:outer dynein arm assembly"/>
    <property type="evidence" value="ECO:0000250"/>
    <property type="project" value="UniProtKB"/>
</dbReference>
<dbReference type="GO" id="GO:0000209">
    <property type="term" value="P:protein polyubiquitination"/>
    <property type="evidence" value="ECO:0000318"/>
    <property type="project" value="GO_Central"/>
</dbReference>
<dbReference type="CDD" id="cd00200">
    <property type="entry name" value="WD40"/>
    <property type="match status" value="1"/>
</dbReference>
<dbReference type="FunFam" id="2.130.10.10:FF:000227">
    <property type="entry name" value="Dynein assembly factor with WDR repeat domains 1"/>
    <property type="match status" value="1"/>
</dbReference>
<dbReference type="FunFam" id="2.130.10.10:FF:000250">
    <property type="entry name" value="Dynein assembly factor with WDR repeat domains 1"/>
    <property type="match status" value="1"/>
</dbReference>
<dbReference type="FunFam" id="2.130.10.10:FF:000720">
    <property type="entry name" value="Dynein assembly factor with WDR repeat domains 1"/>
    <property type="match status" value="1"/>
</dbReference>
<dbReference type="FunFam" id="2.130.10.10:FF:001051">
    <property type="entry name" value="dynein assembly factor with WDR repeat domains 1"/>
    <property type="match status" value="1"/>
</dbReference>
<dbReference type="Gene3D" id="2.130.10.10">
    <property type="entry name" value="YVTN repeat-like/Quinoprotein amine dehydrogenase"/>
    <property type="match status" value="4"/>
</dbReference>
<dbReference type="InterPro" id="IPR020472">
    <property type="entry name" value="G-protein_beta_WD-40_rep"/>
</dbReference>
<dbReference type="InterPro" id="IPR015943">
    <property type="entry name" value="WD40/YVTN_repeat-like_dom_sf"/>
</dbReference>
<dbReference type="InterPro" id="IPR019775">
    <property type="entry name" value="WD40_repeat_CS"/>
</dbReference>
<dbReference type="InterPro" id="IPR036322">
    <property type="entry name" value="WD40_repeat_dom_sf"/>
</dbReference>
<dbReference type="InterPro" id="IPR001680">
    <property type="entry name" value="WD40_rpt"/>
</dbReference>
<dbReference type="PANTHER" id="PTHR22847:SF744">
    <property type="entry name" value="DYNEIN ASSEMBLY FACTOR WITH WD REPEATS 1"/>
    <property type="match status" value="1"/>
</dbReference>
<dbReference type="PANTHER" id="PTHR22847">
    <property type="entry name" value="WD40 REPEAT PROTEIN"/>
    <property type="match status" value="1"/>
</dbReference>
<dbReference type="Pfam" id="PF00400">
    <property type="entry name" value="WD40"/>
    <property type="match status" value="8"/>
</dbReference>
<dbReference type="PRINTS" id="PR00320">
    <property type="entry name" value="GPROTEINBRPT"/>
</dbReference>
<dbReference type="SMART" id="SM00320">
    <property type="entry name" value="WD40"/>
    <property type="match status" value="8"/>
</dbReference>
<dbReference type="SUPFAM" id="SSF50978">
    <property type="entry name" value="WD40 repeat-like"/>
    <property type="match status" value="1"/>
</dbReference>
<dbReference type="PROSITE" id="PS00678">
    <property type="entry name" value="WD_REPEATS_1"/>
    <property type="match status" value="4"/>
</dbReference>
<dbReference type="PROSITE" id="PS50082">
    <property type="entry name" value="WD_REPEATS_2"/>
    <property type="match status" value="8"/>
</dbReference>
<dbReference type="PROSITE" id="PS50294">
    <property type="entry name" value="WD_REPEATS_REGION"/>
    <property type="match status" value="1"/>
</dbReference>
<feature type="chain" id="PRO_0000242654" description="Dynein assembly factor with WD repeat domains 1">
    <location>
        <begin position="1"/>
        <end position="415"/>
    </location>
</feature>
<feature type="repeat" description="WD 1">
    <location>
        <begin position="90"/>
        <end position="129"/>
    </location>
</feature>
<feature type="repeat" description="WD 2">
    <location>
        <begin position="132"/>
        <end position="174"/>
    </location>
</feature>
<feature type="repeat" description="WD 3">
    <location>
        <begin position="175"/>
        <end position="214"/>
    </location>
</feature>
<feature type="repeat" description="WD 4">
    <location>
        <begin position="217"/>
        <end position="256"/>
    </location>
</feature>
<feature type="repeat" description="WD 5">
    <location>
        <begin position="259"/>
        <end position="298"/>
    </location>
</feature>
<feature type="repeat" description="WD 6">
    <location>
        <begin position="301"/>
        <end position="340"/>
    </location>
</feature>
<feature type="repeat" description="WD 7">
    <location>
        <begin position="343"/>
        <end position="384"/>
    </location>
</feature>
<feature type="repeat" description="WD 8">
    <location>
        <begin position="386"/>
        <end position="415"/>
    </location>
</feature>
<feature type="splice variant" id="VSP_019460" description="In isoform 2." evidence="7">
    <original>GTARIFSAATRKCIAKLEGHEGEISKISFNPQGNHLLTGSSDKTA</original>
    <variation>DGVSLCRPGRSAVARSWLTATCASQVQAILLPQPPELCHVLGNHV</variation>
    <location>
        <begin position="325"/>
        <end position="369"/>
    </location>
</feature>
<feature type="splice variant" id="VSP_019461" description="In isoform 2." evidence="7">
    <location>
        <begin position="370"/>
        <end position="415"/>
    </location>
</feature>
<feature type="sequence variant" id="VAR_026853" description="In dbSNP:rs11894733.">
    <original>T</original>
    <variation>I</variation>
    <location>
        <position position="27"/>
    </location>
</feature>
<feature type="sequence variant" id="VAR_088355" description="In CILD52; likely pathogenic." evidence="5">
    <location>
        <begin position="66"/>
        <end position="415"/>
    </location>
</feature>
<feature type="sequence variant" id="VAR_088356" description="In CILD52; likely pathogenic; decreased ODA assembly to ciliary axonemes in patient-derived epithelial respiratory cells." evidence="6">
    <location>
        <begin position="119"/>
        <end position="415"/>
    </location>
</feature>
<feature type="sequence variant" id="VAR_026854" description="In dbSNP:rs1715828." evidence="2">
    <original>T</original>
    <variation>S</variation>
    <location>
        <position position="121"/>
    </location>
</feature>
<feature type="sequence variant" id="VAR_035891" description="In a breast cancer sample; somatic mutation; dbSNP:rs113776284." evidence="3">
    <original>T</original>
    <variation>M</variation>
    <location>
        <position position="129"/>
    </location>
</feature>
<feature type="sequence variant" id="VAR_088357" description="In CILD52; likely pathogenic; loss-of-function variant unable to rescue ciliary motility defects and cardiac looping abnormalities when expressed in daw-deficient zebrafish; patient-derived multiciliated respiratory cells show a subtle reduction of the beating amplitude; slightly decreased protein stability; normal ODA assembly to ciliary axonemes in respiratory cells; dbSNP:rs1265774517." evidence="6">
    <original>N</original>
    <variation>D</variation>
    <location>
        <position position="143"/>
    </location>
</feature>
<feature type="sequence variant" id="VAR_033811" description="In dbSNP:rs35027781.">
    <original>G</original>
    <variation>S</variation>
    <location>
        <position position="259"/>
    </location>
</feature>
<feature type="sequence variant" id="VAR_033812" description="In dbSNP:rs35395984.">
    <original>L</original>
    <variation>F</variation>
    <location>
        <position position="317"/>
    </location>
</feature>
<feature type="sequence variant" id="VAR_088358" description="In CILD52; likely pathogenic; loss-of-function variant unable to rescue ciliary motility defects and cardiac looping abnormalities when expressed in daw-deficient zebrafish; decreased protein stability; dbSNP:rs541693633." evidence="5 6">
    <original>S</original>
    <variation>T</variation>
    <location>
        <position position="364"/>
    </location>
</feature>
<feature type="sequence variant" id="VAR_088359" description="In CILD52; likely pathogenic; hypomorphic variant resulting in minor rescue of ciliary motility defects and cardiac looping abnormalities when expressed in daw-deficient zebrafish; dbSNP:rs1435687311." evidence="5 6">
    <original>W</original>
    <variation>C</variation>
    <location>
        <position position="372"/>
    </location>
</feature>
<feature type="sequence conflict" description="In Ref. 1; BAC05425." evidence="9" ref="1">
    <original>D</original>
    <variation>G</variation>
    <location>
        <position position="408"/>
    </location>
</feature>
<feature type="strand" evidence="12">
    <location>
        <begin position="83"/>
        <end position="89"/>
    </location>
</feature>
<feature type="strand" evidence="12">
    <location>
        <begin position="95"/>
        <end position="100"/>
    </location>
</feature>
<feature type="strand" evidence="12">
    <location>
        <begin position="104"/>
        <end position="111"/>
    </location>
</feature>
<feature type="strand" evidence="12">
    <location>
        <begin position="116"/>
        <end position="120"/>
    </location>
</feature>
<feature type="turn" evidence="12">
    <location>
        <begin position="121"/>
        <end position="123"/>
    </location>
</feature>
<feature type="strand" evidence="12">
    <location>
        <begin position="126"/>
        <end position="130"/>
    </location>
</feature>
<feature type="strand" evidence="12">
    <location>
        <begin position="137"/>
        <end position="142"/>
    </location>
</feature>
<feature type="turn" evidence="12">
    <location>
        <begin position="144"/>
        <end position="146"/>
    </location>
</feature>
<feature type="strand" evidence="12">
    <location>
        <begin position="149"/>
        <end position="154"/>
    </location>
</feature>
<feature type="strand" evidence="12">
    <location>
        <begin position="159"/>
        <end position="167"/>
    </location>
</feature>
<feature type="strand" evidence="12">
    <location>
        <begin position="169"/>
        <end position="173"/>
    </location>
</feature>
<feature type="strand" evidence="12">
    <location>
        <begin position="180"/>
        <end position="185"/>
    </location>
</feature>
<feature type="helix" evidence="12">
    <location>
        <begin position="187"/>
        <end position="189"/>
    </location>
</feature>
<feature type="strand" evidence="12">
    <location>
        <begin position="191"/>
        <end position="196"/>
    </location>
</feature>
<feature type="strand" evidence="12">
    <location>
        <begin position="199"/>
        <end position="208"/>
    </location>
</feature>
<feature type="strand" evidence="12">
    <location>
        <begin position="211"/>
        <end position="216"/>
    </location>
</feature>
<feature type="strand" evidence="12">
    <location>
        <begin position="222"/>
        <end position="227"/>
    </location>
</feature>
<feature type="strand" evidence="12">
    <location>
        <begin position="233"/>
        <end position="238"/>
    </location>
</feature>
<feature type="strand" evidence="12">
    <location>
        <begin position="243"/>
        <end position="247"/>
    </location>
</feature>
<feature type="turn" evidence="12">
    <location>
        <begin position="248"/>
        <end position="250"/>
    </location>
</feature>
<feature type="strand" evidence="12">
    <location>
        <begin position="252"/>
        <end position="257"/>
    </location>
</feature>
<feature type="strand" evidence="12">
    <location>
        <begin position="264"/>
        <end position="269"/>
    </location>
</feature>
<feature type="strand" evidence="12">
    <location>
        <begin position="274"/>
        <end position="283"/>
    </location>
</feature>
<feature type="strand" evidence="12">
    <location>
        <begin position="285"/>
        <end position="289"/>
    </location>
</feature>
<feature type="turn" evidence="12">
    <location>
        <begin position="290"/>
        <end position="292"/>
    </location>
</feature>
<feature type="strand" evidence="12">
    <location>
        <begin position="295"/>
        <end position="299"/>
    </location>
</feature>
<feature type="strand" evidence="12">
    <location>
        <begin position="306"/>
        <end position="311"/>
    </location>
</feature>
<feature type="strand" evidence="12">
    <location>
        <begin position="313"/>
        <end position="315"/>
    </location>
</feature>
<feature type="strand" evidence="12">
    <location>
        <begin position="317"/>
        <end position="322"/>
    </location>
</feature>
<feature type="strand" evidence="12">
    <location>
        <begin position="327"/>
        <end position="331"/>
    </location>
</feature>
<feature type="turn" evidence="12">
    <location>
        <begin position="332"/>
        <end position="334"/>
    </location>
</feature>
<feature type="strand" evidence="12">
    <location>
        <begin position="337"/>
        <end position="341"/>
    </location>
</feature>
<feature type="strand" evidence="12">
    <location>
        <begin position="348"/>
        <end position="353"/>
    </location>
</feature>
<feature type="strand" evidence="12">
    <location>
        <begin position="357"/>
        <end position="364"/>
    </location>
</feature>
<feature type="strand" evidence="12">
    <location>
        <begin position="369"/>
        <end position="373"/>
    </location>
</feature>
<feature type="turn" evidence="12">
    <location>
        <begin position="374"/>
        <end position="376"/>
    </location>
</feature>
<feature type="strand" evidence="12">
    <location>
        <begin position="379"/>
        <end position="383"/>
    </location>
</feature>
<feature type="strand" evidence="12">
    <location>
        <begin position="390"/>
        <end position="395"/>
    </location>
</feature>
<feature type="strand" evidence="12">
    <location>
        <begin position="402"/>
        <end position="406"/>
    </location>
</feature>
<feature type="strand" evidence="12">
    <location>
        <begin position="409"/>
        <end position="415"/>
    </location>
</feature>
<comment type="function">
    <text evidence="6">Required for axonemal dynein assembly and ciliary motility in ciliated organs, including Kupffer's vesicle, during embryogenesis (PubMed:36074124). Facilitates the onset of robust cilia motility during development (PubMed:36074124).</text>
</comment>
<comment type="subunit">
    <text evidence="4">Interacts with IFT46.</text>
</comment>
<comment type="subcellular location">
    <subcellularLocation>
        <location evidence="1">Cytoplasm</location>
        <location evidence="1">Cytoskeleton</location>
        <location evidence="1">Flagellum basal body</location>
    </subcellularLocation>
    <subcellularLocation>
        <location evidence="1">Cytoplasm</location>
        <location evidence="1">Cytoskeleton</location>
        <location evidence="1">Flagellum axoneme</location>
    </subcellularLocation>
    <text evidence="1">Expression is concentrated at the flagellum basal body but is also detected along the length of the flagellum.</text>
</comment>
<comment type="alternative products">
    <event type="alternative splicing"/>
    <isoform>
        <id>Q8N136-1</id>
        <name>1</name>
        <sequence type="displayed"/>
    </isoform>
    <isoform>
        <id>Q8N136-2</id>
        <name>2</name>
        <sequence type="described" ref="VSP_019460 VSP_019461"/>
    </isoform>
</comment>
<comment type="disease" evidence="5 6">
    <disease id="DI-06788">
        <name>Ciliary dyskinesia, primary, 52</name>
        <acronym>CILD52</acronym>
        <description>A form of primary ciliary dyskinesia, a disorder characterized by abnormalities of motile cilia. Respiratory infections leading to chronic inflammation and bronchiectasis are recurrent, due to defects in the respiratory cilia. CILD52 is an autosomal recessive form characterized by laterality defects, and mild respiratory symptoms.</description>
        <dbReference type="MIM" id="620570"/>
    </disease>
    <text>The disease is caused by variants affecting the gene represented in this entry.</text>
</comment>
<comment type="similarity">
    <text evidence="9">Belongs to the WD repeat WDR69 family.</text>
</comment>
<protein>
    <recommendedName>
        <fullName evidence="9">Dynein assembly factor with WD repeat domains 1</fullName>
    </recommendedName>
    <alternativeName>
        <fullName>Outer row dynein assembly protein 16 homolog</fullName>
    </alternativeName>
    <alternativeName>
        <fullName>WD repeat-containing protein 69</fullName>
    </alternativeName>
</protein>
<reference key="1">
    <citation type="journal article" date="2004" name="Nat. Genet.">
        <title>Complete sequencing and characterization of 21,243 full-length human cDNAs.</title>
        <authorList>
            <person name="Ota T."/>
            <person name="Suzuki Y."/>
            <person name="Nishikawa T."/>
            <person name="Otsuki T."/>
            <person name="Sugiyama T."/>
            <person name="Irie R."/>
            <person name="Wakamatsu A."/>
            <person name="Hayashi K."/>
            <person name="Sato H."/>
            <person name="Nagai K."/>
            <person name="Kimura K."/>
            <person name="Makita H."/>
            <person name="Sekine M."/>
            <person name="Obayashi M."/>
            <person name="Nishi T."/>
            <person name="Shibahara T."/>
            <person name="Tanaka T."/>
            <person name="Ishii S."/>
            <person name="Yamamoto J."/>
            <person name="Saito K."/>
            <person name="Kawai Y."/>
            <person name="Isono Y."/>
            <person name="Nakamura Y."/>
            <person name="Nagahari K."/>
            <person name="Murakami K."/>
            <person name="Yasuda T."/>
            <person name="Iwayanagi T."/>
            <person name="Wagatsuma M."/>
            <person name="Shiratori A."/>
            <person name="Sudo H."/>
            <person name="Hosoiri T."/>
            <person name="Kaku Y."/>
            <person name="Kodaira H."/>
            <person name="Kondo H."/>
            <person name="Sugawara M."/>
            <person name="Takahashi M."/>
            <person name="Kanda K."/>
            <person name="Yokoi T."/>
            <person name="Furuya T."/>
            <person name="Kikkawa E."/>
            <person name="Omura Y."/>
            <person name="Abe K."/>
            <person name="Kamihara K."/>
            <person name="Katsuta N."/>
            <person name="Sato K."/>
            <person name="Tanikawa M."/>
            <person name="Yamazaki M."/>
            <person name="Ninomiya K."/>
            <person name="Ishibashi T."/>
            <person name="Yamashita H."/>
            <person name="Murakawa K."/>
            <person name="Fujimori K."/>
            <person name="Tanai H."/>
            <person name="Kimata M."/>
            <person name="Watanabe M."/>
            <person name="Hiraoka S."/>
            <person name="Chiba Y."/>
            <person name="Ishida S."/>
            <person name="Ono Y."/>
            <person name="Takiguchi S."/>
            <person name="Watanabe S."/>
            <person name="Yosida M."/>
            <person name="Hotuta T."/>
            <person name="Kusano J."/>
            <person name="Kanehori K."/>
            <person name="Takahashi-Fujii A."/>
            <person name="Hara H."/>
            <person name="Tanase T.-O."/>
            <person name="Nomura Y."/>
            <person name="Togiya S."/>
            <person name="Komai F."/>
            <person name="Hara R."/>
            <person name="Takeuchi K."/>
            <person name="Arita M."/>
            <person name="Imose N."/>
            <person name="Musashino K."/>
            <person name="Yuuki H."/>
            <person name="Oshima A."/>
            <person name="Sasaki N."/>
            <person name="Aotsuka S."/>
            <person name="Yoshikawa Y."/>
            <person name="Matsunawa H."/>
            <person name="Ichihara T."/>
            <person name="Shiohata N."/>
            <person name="Sano S."/>
            <person name="Moriya S."/>
            <person name="Momiyama H."/>
            <person name="Satoh N."/>
            <person name="Takami S."/>
            <person name="Terashima Y."/>
            <person name="Suzuki O."/>
            <person name="Nakagawa S."/>
            <person name="Senoh A."/>
            <person name="Mizoguchi H."/>
            <person name="Goto Y."/>
            <person name="Shimizu F."/>
            <person name="Wakebe H."/>
            <person name="Hishigaki H."/>
            <person name="Watanabe T."/>
            <person name="Sugiyama A."/>
            <person name="Takemoto M."/>
            <person name="Kawakami B."/>
            <person name="Yamazaki M."/>
            <person name="Watanabe K."/>
            <person name="Kumagai A."/>
            <person name="Itakura S."/>
            <person name="Fukuzumi Y."/>
            <person name="Fujimori Y."/>
            <person name="Komiyama M."/>
            <person name="Tashiro H."/>
            <person name="Tanigami A."/>
            <person name="Fujiwara T."/>
            <person name="Ono T."/>
            <person name="Yamada K."/>
            <person name="Fujii Y."/>
            <person name="Ozaki K."/>
            <person name="Hirao M."/>
            <person name="Ohmori Y."/>
            <person name="Kawabata A."/>
            <person name="Hikiji T."/>
            <person name="Kobatake N."/>
            <person name="Inagaki H."/>
            <person name="Ikema Y."/>
            <person name="Okamoto S."/>
            <person name="Okitani R."/>
            <person name="Kawakami T."/>
            <person name="Noguchi S."/>
            <person name="Itoh T."/>
            <person name="Shigeta K."/>
            <person name="Senba T."/>
            <person name="Matsumura K."/>
            <person name="Nakajima Y."/>
            <person name="Mizuno T."/>
            <person name="Morinaga M."/>
            <person name="Sasaki M."/>
            <person name="Togashi T."/>
            <person name="Oyama M."/>
            <person name="Hata H."/>
            <person name="Watanabe M."/>
            <person name="Komatsu T."/>
            <person name="Mizushima-Sugano J."/>
            <person name="Satoh T."/>
            <person name="Shirai Y."/>
            <person name="Takahashi Y."/>
            <person name="Nakagawa K."/>
            <person name="Okumura K."/>
            <person name="Nagase T."/>
            <person name="Nomura N."/>
            <person name="Kikuchi H."/>
            <person name="Masuho Y."/>
            <person name="Yamashita R."/>
            <person name="Nakai K."/>
            <person name="Yada T."/>
            <person name="Nakamura Y."/>
            <person name="Ohara O."/>
            <person name="Isogai T."/>
            <person name="Sugano S."/>
        </authorList>
    </citation>
    <scope>NUCLEOTIDE SEQUENCE [LARGE SCALE MRNA] (ISOFORMS 1 AND 2)</scope>
    <scope>VARIANT SER-121</scope>
    <source>
        <tissue>Testis</tissue>
    </source>
</reference>
<reference key="2">
    <citation type="journal article" date="2005" name="Nature">
        <title>Generation and annotation of the DNA sequences of human chromosomes 2 and 4.</title>
        <authorList>
            <person name="Hillier L.W."/>
            <person name="Graves T.A."/>
            <person name="Fulton R.S."/>
            <person name="Fulton L.A."/>
            <person name="Pepin K.H."/>
            <person name="Minx P."/>
            <person name="Wagner-McPherson C."/>
            <person name="Layman D."/>
            <person name="Wylie K."/>
            <person name="Sekhon M."/>
            <person name="Becker M.C."/>
            <person name="Fewell G.A."/>
            <person name="Delehaunty K.D."/>
            <person name="Miner T.L."/>
            <person name="Nash W.E."/>
            <person name="Kremitzki C."/>
            <person name="Oddy L."/>
            <person name="Du H."/>
            <person name="Sun H."/>
            <person name="Bradshaw-Cordum H."/>
            <person name="Ali J."/>
            <person name="Carter J."/>
            <person name="Cordes M."/>
            <person name="Harris A."/>
            <person name="Isak A."/>
            <person name="van Brunt A."/>
            <person name="Nguyen C."/>
            <person name="Du F."/>
            <person name="Courtney L."/>
            <person name="Kalicki J."/>
            <person name="Ozersky P."/>
            <person name="Abbott S."/>
            <person name="Armstrong J."/>
            <person name="Belter E.A."/>
            <person name="Caruso L."/>
            <person name="Cedroni M."/>
            <person name="Cotton M."/>
            <person name="Davidson T."/>
            <person name="Desai A."/>
            <person name="Elliott G."/>
            <person name="Erb T."/>
            <person name="Fronick C."/>
            <person name="Gaige T."/>
            <person name="Haakenson W."/>
            <person name="Haglund K."/>
            <person name="Holmes A."/>
            <person name="Harkins R."/>
            <person name="Kim K."/>
            <person name="Kruchowski S.S."/>
            <person name="Strong C.M."/>
            <person name="Grewal N."/>
            <person name="Goyea E."/>
            <person name="Hou S."/>
            <person name="Levy A."/>
            <person name="Martinka S."/>
            <person name="Mead K."/>
            <person name="McLellan M.D."/>
            <person name="Meyer R."/>
            <person name="Randall-Maher J."/>
            <person name="Tomlinson C."/>
            <person name="Dauphin-Kohlberg S."/>
            <person name="Kozlowicz-Reilly A."/>
            <person name="Shah N."/>
            <person name="Swearengen-Shahid S."/>
            <person name="Snider J."/>
            <person name="Strong J.T."/>
            <person name="Thompson J."/>
            <person name="Yoakum M."/>
            <person name="Leonard S."/>
            <person name="Pearman C."/>
            <person name="Trani L."/>
            <person name="Radionenko M."/>
            <person name="Waligorski J.E."/>
            <person name="Wang C."/>
            <person name="Rock S.M."/>
            <person name="Tin-Wollam A.-M."/>
            <person name="Maupin R."/>
            <person name="Latreille P."/>
            <person name="Wendl M.C."/>
            <person name="Yang S.-P."/>
            <person name="Pohl C."/>
            <person name="Wallis J.W."/>
            <person name="Spieth J."/>
            <person name="Bieri T.A."/>
            <person name="Berkowicz N."/>
            <person name="Nelson J.O."/>
            <person name="Osborne J."/>
            <person name="Ding L."/>
            <person name="Meyer R."/>
            <person name="Sabo A."/>
            <person name="Shotland Y."/>
            <person name="Sinha P."/>
            <person name="Wohldmann P.E."/>
            <person name="Cook L.L."/>
            <person name="Hickenbotham M.T."/>
            <person name="Eldred J."/>
            <person name="Williams D."/>
            <person name="Jones T.A."/>
            <person name="She X."/>
            <person name="Ciccarelli F.D."/>
            <person name="Izaurralde E."/>
            <person name="Taylor J."/>
            <person name="Schmutz J."/>
            <person name="Myers R.M."/>
            <person name="Cox D.R."/>
            <person name="Huang X."/>
            <person name="McPherson J.D."/>
            <person name="Mardis E.R."/>
            <person name="Clifton S.W."/>
            <person name="Warren W.C."/>
            <person name="Chinwalla A.T."/>
            <person name="Eddy S.R."/>
            <person name="Marra M.A."/>
            <person name="Ovcharenko I."/>
            <person name="Furey T.S."/>
            <person name="Miller W."/>
            <person name="Eichler E.E."/>
            <person name="Bork P."/>
            <person name="Suyama M."/>
            <person name="Torrents D."/>
            <person name="Waterston R.H."/>
            <person name="Wilson R.K."/>
        </authorList>
    </citation>
    <scope>NUCLEOTIDE SEQUENCE [LARGE SCALE GENOMIC DNA]</scope>
</reference>
<reference key="3">
    <citation type="journal article" date="2004" name="Genome Res.">
        <title>The status, quality, and expansion of the NIH full-length cDNA project: the Mammalian Gene Collection (MGC).</title>
        <authorList>
            <consortium name="The MGC Project Team"/>
        </authorList>
    </citation>
    <scope>NUCLEOTIDE SEQUENCE [LARGE SCALE MRNA] (ISOFORM 1)</scope>
    <source>
        <tissue>Testis</tissue>
    </source>
</reference>
<reference key="4">
    <citation type="journal article" date="2008" name="J. Cell Biol.">
        <title>ODA16 aids axonemal outer row dynein assembly through an interaction with the intraflagellar transport machinery.</title>
        <authorList>
            <person name="Ahmed N.T."/>
            <person name="Gao C."/>
            <person name="Lucker B.F."/>
            <person name="Cole D.G."/>
            <person name="Mitchell D.R."/>
        </authorList>
    </citation>
    <scope>INTERACTION WITH IFT46</scope>
</reference>
<reference evidence="11" key="5">
    <citation type="journal article" date="2020" name="Protein Sci.">
        <title>Purification and crystal structure of human ODA16: Implications for ciliary import of outer dynein arms by the intraflagellar transport machinery.</title>
        <authorList>
            <person name="Wang J."/>
            <person name="Taschner M."/>
            <person name="Petriman N.A."/>
            <person name="Andersen M.B."/>
            <person name="Basquin J."/>
            <person name="Bhogaraju S."/>
            <person name="Vetter M."/>
            <person name="Wachter S."/>
            <person name="Lorentzen A."/>
            <person name="Lorentzen E."/>
        </authorList>
    </citation>
    <scope>X-RAY CRYSTALLOGRAPHY (2.65 ANGSTROMS)</scope>
</reference>
<reference key="6">
    <citation type="journal article" date="2006" name="Science">
        <title>The consensus coding sequences of human breast and colorectal cancers.</title>
        <authorList>
            <person name="Sjoeblom T."/>
            <person name="Jones S."/>
            <person name="Wood L.D."/>
            <person name="Parsons D.W."/>
            <person name="Lin J."/>
            <person name="Barber T.D."/>
            <person name="Mandelker D."/>
            <person name="Leary R.J."/>
            <person name="Ptak J."/>
            <person name="Silliman N."/>
            <person name="Szabo S."/>
            <person name="Buckhaults P."/>
            <person name="Farrell C."/>
            <person name="Meeh P."/>
            <person name="Markowitz S.D."/>
            <person name="Willis J."/>
            <person name="Dawson D."/>
            <person name="Willson J.K.V."/>
            <person name="Gazdar A.F."/>
            <person name="Hartigan J."/>
            <person name="Wu L."/>
            <person name="Liu C."/>
            <person name="Parmigiani G."/>
            <person name="Park B.H."/>
            <person name="Bachman K.E."/>
            <person name="Papadopoulos N."/>
            <person name="Vogelstein B."/>
            <person name="Kinzler K.W."/>
            <person name="Velculescu V.E."/>
        </authorList>
    </citation>
    <scope>VARIANT [LARGE SCALE ANALYSIS] MET-129</scope>
</reference>
<reference key="7">
    <citation type="journal article" date="2017" name="Nat. Genet.">
        <title>Contribution of rare inherited and de novo variants in 2,871 congenital heart disease probands.</title>
        <authorList>
            <person name="Jin S.C."/>
            <person name="Homsy J."/>
            <person name="Zaidi S."/>
            <person name="Lu Q."/>
            <person name="Morton S."/>
            <person name="DePalma S.R."/>
            <person name="Zeng X."/>
            <person name="Qi H."/>
            <person name="Chang W."/>
            <person name="Sierant M.C."/>
            <person name="Hung W.C."/>
            <person name="Haider S."/>
            <person name="Zhang J."/>
            <person name="Knight J."/>
            <person name="Bjornson R.D."/>
            <person name="Castaldi C."/>
            <person name="Tikhonoa I.R."/>
            <person name="Bilguvar K."/>
            <person name="Mane S.M."/>
            <person name="Sanders S.J."/>
            <person name="Mital S."/>
            <person name="Russell M.W."/>
            <person name="Gaynor J.W."/>
            <person name="Deanfield J."/>
            <person name="Giardini A."/>
            <person name="Porter G.A. Jr."/>
            <person name="Srivastava D."/>
            <person name="Lo C.W."/>
            <person name="Shen Y."/>
            <person name="Watkins W.S."/>
            <person name="Yandell M."/>
            <person name="Yost H.J."/>
            <person name="Tristani-Firouzi M."/>
            <person name="Newburger J.W."/>
            <person name="Roberts A.E."/>
            <person name="Kim R."/>
            <person name="Zhao H."/>
            <person name="Kaltman J.R."/>
            <person name="Goldmuntz E."/>
            <person name="Chung W.K."/>
            <person name="Seidman J.G."/>
            <person name="Gelb B.D."/>
            <person name="Seidman C.E."/>
            <person name="Lifton R.P."/>
            <person name="Brueckner M."/>
        </authorList>
    </citation>
    <scope>VARIANTS CILD52 66-LEU--ARG-415 DEL; THR-364 AND CYS-372</scope>
    <scope>INVOLVEMENT IN CILD52</scope>
</reference>
<reference key="8">
    <citation type="journal article" date="2022" name="Genet. Med.">
        <title>Biallelic DAW1 variants cause a motile ciliopathy characterized by laterality defects and subtle ciliary beating abnormalities.</title>
        <authorList>
            <person name="Leslie J.S."/>
            <person name="Hjeij R."/>
            <person name="Vivante A."/>
            <person name="Bearce E.A."/>
            <person name="Dyer L."/>
            <person name="Wang J."/>
            <person name="Rawlins L."/>
            <person name="Kennedy J."/>
            <person name="Ubeyratna N."/>
            <person name="Fasham J."/>
            <person name="Irons Z.H."/>
            <person name="Craig S.B."/>
            <person name="Koenig J."/>
            <person name="George S."/>
            <person name="Pode-Shakked B."/>
            <person name="Bolkier Y."/>
            <person name="Barel O."/>
            <person name="Mane S."/>
            <person name="Frederiksen K.K."/>
            <person name="Wenger O."/>
            <person name="Scott E."/>
            <person name="Cross H.E."/>
            <person name="Lorentzen E."/>
            <person name="Norris D.P."/>
            <person name="Anikster Y."/>
            <person name="Omran H."/>
            <person name="Grimes D.T."/>
            <person name="Crosby A.H."/>
            <person name="Baple E.L."/>
        </authorList>
    </citation>
    <scope>VARIANTS CILD52 119-TRP--ARG-415 DEL AND ASP-143</scope>
    <scope>CHARACTERIZATION OF VARIANTS CILD52 119-TRP--ARG-415 DEL; ASP-143; THR-364 AND CYS-372</scope>
    <scope>INVOLVEMENT IN CILD52</scope>
    <scope>FUNCTION</scope>
</reference>
<name>DAW1_HUMAN</name>
<evidence type="ECO:0000250" key="1">
    <source>
        <dbReference type="UniProtKB" id="Q3Y8L7"/>
    </source>
</evidence>
<evidence type="ECO:0000269" key="2">
    <source>
    </source>
</evidence>
<evidence type="ECO:0000269" key="3">
    <source>
    </source>
</evidence>
<evidence type="ECO:0000269" key="4">
    <source>
    </source>
</evidence>
<evidence type="ECO:0000269" key="5">
    <source>
    </source>
</evidence>
<evidence type="ECO:0000269" key="6">
    <source>
    </source>
</evidence>
<evidence type="ECO:0000303" key="7">
    <source>
    </source>
</evidence>
<evidence type="ECO:0000303" key="8">
    <source>
    </source>
</evidence>
<evidence type="ECO:0000305" key="9"/>
<evidence type="ECO:0000312" key="10">
    <source>
        <dbReference type="HGNC" id="HGNC:26383"/>
    </source>
</evidence>
<evidence type="ECO:0007744" key="11">
    <source>
        <dbReference type="PDB" id="5NNZ"/>
    </source>
</evidence>
<evidence type="ECO:0007829" key="12">
    <source>
        <dbReference type="PDB" id="5NNZ"/>
    </source>
</evidence>
<organism>
    <name type="scientific">Homo sapiens</name>
    <name type="common">Human</name>
    <dbReference type="NCBI Taxonomy" id="9606"/>
    <lineage>
        <taxon>Eukaryota</taxon>
        <taxon>Metazoa</taxon>
        <taxon>Chordata</taxon>
        <taxon>Craniata</taxon>
        <taxon>Vertebrata</taxon>
        <taxon>Euteleostomi</taxon>
        <taxon>Mammalia</taxon>
        <taxon>Eutheria</taxon>
        <taxon>Euarchontoglires</taxon>
        <taxon>Primates</taxon>
        <taxon>Haplorrhini</taxon>
        <taxon>Catarrhini</taxon>
        <taxon>Hominidae</taxon>
        <taxon>Homo</taxon>
    </lineage>
</organism>
<gene>
    <name evidence="10" type="primary">DAW1</name>
    <name evidence="8" type="synonym">ODA16</name>
    <name type="synonym">WDR69</name>
</gene>
<proteinExistence type="evidence at protein level"/>
<sequence length="415" mass="45777">MKLKSLLLRYYPPGIMLEYEKHGELKTKSIDLLDLGPSTDVSALVEEIQKAEPLLTASRTEQVKLLIQRLQEKLGQNSNHTFYLFKVLKAHILPLTNVALNKSGSCFITGSYDRTCKLWDTASGEELNTLEGHRNVVYAIAFNNPYGDKIATGSFDKTCKLWSVETGKCYHTFRGHTAEIVCLSFNPQSTLVATGSMDTTAKLWDIQNGEEVYTLRGHSAEIISLSFNTSGDRIITGSFDHTVVVWDADTGRKVNILIGHCAEISSASFNWDCSLILTGSMDKTCKLWDATNGKCVATLTGHDDEILDSCFDYTGKLIATASADGTARIFSAATRKCIAKLEGHEGEISKISFNPQGNHLLTGSSDKTARIWDAQTGQCLQVLEGHTDEIFSCAFNYKGNIVITGSKDNTCRIWR</sequence>
<accession>Q8N136</accession>
<accession>Q6ZRY1</accession>
<accession>Q8N776</accession>